<name>RL19_ECO57</name>
<feature type="initiator methionine" description="Removed" evidence="1">
    <location>
        <position position="1"/>
    </location>
</feature>
<feature type="chain" id="PRO_0000163452" description="Large ribosomal subunit protein bL19">
    <location>
        <begin position="2"/>
        <end position="115"/>
    </location>
</feature>
<protein>
    <recommendedName>
        <fullName evidence="2">Large ribosomal subunit protein bL19</fullName>
    </recommendedName>
    <alternativeName>
        <fullName>50S ribosomal protein L19</fullName>
    </alternativeName>
</protein>
<comment type="function">
    <text evidence="1">This protein is located at the 30S-50S ribosomal subunit interface and may play a role in the structure and function of the aminoacyl-tRNA binding site.</text>
</comment>
<comment type="similarity">
    <text evidence="2">Belongs to the bacterial ribosomal protein bL19 family.</text>
</comment>
<gene>
    <name type="primary">rplS</name>
    <name type="ordered locus">Z3900</name>
    <name type="ordered locus">ECs3469</name>
</gene>
<sequence>MSNIIKQLEQEQMKQDVPSFRPGDTVEVKVWVVEGSKKRLQAFEGVVIAIRNRGLHSAFTVRKISNGEGVERVFQTHSPVVDSISVKRRGAVRKAKLYYLRERTGKAARIKERLN</sequence>
<evidence type="ECO:0000250" key="1"/>
<evidence type="ECO:0000305" key="2"/>
<keyword id="KW-1185">Reference proteome</keyword>
<keyword id="KW-0687">Ribonucleoprotein</keyword>
<keyword id="KW-0689">Ribosomal protein</keyword>
<accession>P0A7K8</accession>
<accession>P02420</accession>
<organism>
    <name type="scientific">Escherichia coli O157:H7</name>
    <dbReference type="NCBI Taxonomy" id="83334"/>
    <lineage>
        <taxon>Bacteria</taxon>
        <taxon>Pseudomonadati</taxon>
        <taxon>Pseudomonadota</taxon>
        <taxon>Gammaproteobacteria</taxon>
        <taxon>Enterobacterales</taxon>
        <taxon>Enterobacteriaceae</taxon>
        <taxon>Escherichia</taxon>
    </lineage>
</organism>
<proteinExistence type="inferred from homology"/>
<dbReference type="EMBL" id="AE005174">
    <property type="protein sequence ID" value="AAG57717.1"/>
    <property type="molecule type" value="Genomic_DNA"/>
</dbReference>
<dbReference type="EMBL" id="BA000007">
    <property type="protein sequence ID" value="BAB36892.1"/>
    <property type="molecule type" value="Genomic_DNA"/>
</dbReference>
<dbReference type="PIR" id="A85907">
    <property type="entry name" value="A85907"/>
</dbReference>
<dbReference type="PIR" id="E91062">
    <property type="entry name" value="E91062"/>
</dbReference>
<dbReference type="RefSeq" id="NP_311496.1">
    <property type="nucleotide sequence ID" value="NC_002695.1"/>
</dbReference>
<dbReference type="RefSeq" id="WP_000065253.1">
    <property type="nucleotide sequence ID" value="NZ_VOAI01000040.1"/>
</dbReference>
<dbReference type="EMDB" id="EMD-42504"/>
<dbReference type="EMDB" id="EMD-43929"/>
<dbReference type="EMDB" id="EMD-45569"/>
<dbReference type="EMDB" id="EMD-45572"/>
<dbReference type="EMDB" id="EMD-45573"/>
<dbReference type="EMDB" id="EMD-48479"/>
<dbReference type="EMDB" id="EMD-48513"/>
<dbReference type="SMR" id="P0A7K8"/>
<dbReference type="STRING" id="155864.Z3900"/>
<dbReference type="GeneID" id="914819"/>
<dbReference type="GeneID" id="93774456"/>
<dbReference type="KEGG" id="ece:Z3900"/>
<dbReference type="KEGG" id="ecs:ECs_3469"/>
<dbReference type="PATRIC" id="fig|386585.9.peg.3623"/>
<dbReference type="eggNOG" id="COG0335">
    <property type="taxonomic scope" value="Bacteria"/>
</dbReference>
<dbReference type="HOGENOM" id="CLU_103507_2_1_6"/>
<dbReference type="OMA" id="TITVYYE"/>
<dbReference type="Proteomes" id="UP000000558">
    <property type="component" value="Chromosome"/>
</dbReference>
<dbReference type="Proteomes" id="UP000002519">
    <property type="component" value="Chromosome"/>
</dbReference>
<dbReference type="GO" id="GO:0022625">
    <property type="term" value="C:cytosolic large ribosomal subunit"/>
    <property type="evidence" value="ECO:0007669"/>
    <property type="project" value="TreeGrafter"/>
</dbReference>
<dbReference type="GO" id="GO:0003735">
    <property type="term" value="F:structural constituent of ribosome"/>
    <property type="evidence" value="ECO:0007669"/>
    <property type="project" value="InterPro"/>
</dbReference>
<dbReference type="GO" id="GO:0006412">
    <property type="term" value="P:translation"/>
    <property type="evidence" value="ECO:0007669"/>
    <property type="project" value="UniProtKB-UniRule"/>
</dbReference>
<dbReference type="FunFam" id="2.30.30.790:FF:000001">
    <property type="entry name" value="50S ribosomal protein L19"/>
    <property type="match status" value="1"/>
</dbReference>
<dbReference type="Gene3D" id="2.30.30.790">
    <property type="match status" value="1"/>
</dbReference>
<dbReference type="HAMAP" id="MF_00402">
    <property type="entry name" value="Ribosomal_bL19"/>
    <property type="match status" value="1"/>
</dbReference>
<dbReference type="InterPro" id="IPR001857">
    <property type="entry name" value="Ribosomal_bL19"/>
</dbReference>
<dbReference type="InterPro" id="IPR018257">
    <property type="entry name" value="Ribosomal_bL19_CS"/>
</dbReference>
<dbReference type="InterPro" id="IPR038657">
    <property type="entry name" value="Ribosomal_bL19_sf"/>
</dbReference>
<dbReference type="InterPro" id="IPR008991">
    <property type="entry name" value="Translation_prot_SH3-like_sf"/>
</dbReference>
<dbReference type="NCBIfam" id="TIGR01024">
    <property type="entry name" value="rplS_bact"/>
    <property type="match status" value="1"/>
</dbReference>
<dbReference type="PANTHER" id="PTHR15680:SF9">
    <property type="entry name" value="LARGE RIBOSOMAL SUBUNIT PROTEIN BL19M"/>
    <property type="match status" value="1"/>
</dbReference>
<dbReference type="PANTHER" id="PTHR15680">
    <property type="entry name" value="RIBOSOMAL PROTEIN L19"/>
    <property type="match status" value="1"/>
</dbReference>
<dbReference type="Pfam" id="PF01245">
    <property type="entry name" value="Ribosomal_L19"/>
    <property type="match status" value="1"/>
</dbReference>
<dbReference type="PIRSF" id="PIRSF002191">
    <property type="entry name" value="Ribosomal_L19"/>
    <property type="match status" value="1"/>
</dbReference>
<dbReference type="PRINTS" id="PR00061">
    <property type="entry name" value="RIBOSOMALL19"/>
</dbReference>
<dbReference type="SUPFAM" id="SSF50104">
    <property type="entry name" value="Translation proteins SH3-like domain"/>
    <property type="match status" value="1"/>
</dbReference>
<dbReference type="PROSITE" id="PS01015">
    <property type="entry name" value="RIBOSOMAL_L19"/>
    <property type="match status" value="1"/>
</dbReference>
<reference key="1">
    <citation type="journal article" date="2001" name="Nature">
        <title>Genome sequence of enterohaemorrhagic Escherichia coli O157:H7.</title>
        <authorList>
            <person name="Perna N.T."/>
            <person name="Plunkett G. III"/>
            <person name="Burland V."/>
            <person name="Mau B."/>
            <person name="Glasner J.D."/>
            <person name="Rose D.J."/>
            <person name="Mayhew G.F."/>
            <person name="Evans P.S."/>
            <person name="Gregor J."/>
            <person name="Kirkpatrick H.A."/>
            <person name="Posfai G."/>
            <person name="Hackett J."/>
            <person name="Klink S."/>
            <person name="Boutin A."/>
            <person name="Shao Y."/>
            <person name="Miller L."/>
            <person name="Grotbeck E.J."/>
            <person name="Davis N.W."/>
            <person name="Lim A."/>
            <person name="Dimalanta E.T."/>
            <person name="Potamousis K."/>
            <person name="Apodaca J."/>
            <person name="Anantharaman T.S."/>
            <person name="Lin J."/>
            <person name="Yen G."/>
            <person name="Schwartz D.C."/>
            <person name="Welch R.A."/>
            <person name="Blattner F.R."/>
        </authorList>
    </citation>
    <scope>NUCLEOTIDE SEQUENCE [LARGE SCALE GENOMIC DNA]</scope>
    <source>
        <strain>O157:H7 / EDL933 / ATCC 700927 / EHEC</strain>
    </source>
</reference>
<reference key="2">
    <citation type="journal article" date="2001" name="DNA Res.">
        <title>Complete genome sequence of enterohemorrhagic Escherichia coli O157:H7 and genomic comparison with a laboratory strain K-12.</title>
        <authorList>
            <person name="Hayashi T."/>
            <person name="Makino K."/>
            <person name="Ohnishi M."/>
            <person name="Kurokawa K."/>
            <person name="Ishii K."/>
            <person name="Yokoyama K."/>
            <person name="Han C.-G."/>
            <person name="Ohtsubo E."/>
            <person name="Nakayama K."/>
            <person name="Murata T."/>
            <person name="Tanaka M."/>
            <person name="Tobe T."/>
            <person name="Iida T."/>
            <person name="Takami H."/>
            <person name="Honda T."/>
            <person name="Sasakawa C."/>
            <person name="Ogasawara N."/>
            <person name="Yasunaga T."/>
            <person name="Kuhara S."/>
            <person name="Shiba T."/>
            <person name="Hattori M."/>
            <person name="Shinagawa H."/>
        </authorList>
    </citation>
    <scope>NUCLEOTIDE SEQUENCE [LARGE SCALE GENOMIC DNA]</scope>
    <source>
        <strain>O157:H7 / Sakai / RIMD 0509952 / EHEC</strain>
    </source>
</reference>